<organism>
    <name type="scientific">Herminiimonas arsenicoxydans</name>
    <dbReference type="NCBI Taxonomy" id="204773"/>
    <lineage>
        <taxon>Bacteria</taxon>
        <taxon>Pseudomonadati</taxon>
        <taxon>Pseudomonadota</taxon>
        <taxon>Betaproteobacteria</taxon>
        <taxon>Burkholderiales</taxon>
        <taxon>Oxalobacteraceae</taxon>
        <taxon>Herminiimonas</taxon>
    </lineage>
</organism>
<name>MIAB_HERAR</name>
<sequence length="446" mass="50000">MQKKIYIKTFGCQMNEYDSDKMADVLNASDGLIKTDKAEDADVILLNTCSVREKAQEKVFSDLGRLRELKLLKPDLMIGVGGCVASQEGDAIIKRAPYVDLVFGPQTLHRLPEMLKQRRSTGRSQVDISFPEIEKFDHMPPAKVEGATAFVSIMEGCSKYCSYCVVPYTRGEEVSRRFDDVLTEVAGLEAQGVKEITLLGQNVNAYRGEMADGEIADFALLIEYIAEMEGIERIRYVTSHPKEFTQRLIDTYAKVPKLVDHLYLPAQHGSDRILAAMKRGYTSLEYKSILRRLRAVRPNISISSDFIVGFPGETDEDFEAMMKLIDDIGYDNSFSFIFSPRPGTPAANLADDTPHEVKLKRLQRLQAVIDQNTRRYSDEMVGSVQRILVEGPSKKDADELQGRTENNRVVNFSAGPNAAHLIGQMVNVNITQSHAYTLRGEIVVKQ</sequence>
<evidence type="ECO:0000255" key="1">
    <source>
        <dbReference type="HAMAP-Rule" id="MF_01864"/>
    </source>
</evidence>
<evidence type="ECO:0000255" key="2">
    <source>
        <dbReference type="PROSITE-ProRule" id="PRU01266"/>
    </source>
</evidence>
<proteinExistence type="inferred from homology"/>
<gene>
    <name evidence="1" type="primary">miaB</name>
    <name type="ordered locus">HEAR0381</name>
</gene>
<feature type="chain" id="PRO_0000374341" description="tRNA-2-methylthio-N(6)-dimethylallyladenosine synthase">
    <location>
        <begin position="1"/>
        <end position="446"/>
    </location>
</feature>
<feature type="domain" description="MTTase N-terminal" evidence="1">
    <location>
        <begin position="3"/>
        <end position="120"/>
    </location>
</feature>
<feature type="domain" description="Radical SAM core" evidence="2">
    <location>
        <begin position="143"/>
        <end position="375"/>
    </location>
</feature>
<feature type="domain" description="TRAM" evidence="1">
    <location>
        <begin position="378"/>
        <end position="444"/>
    </location>
</feature>
<feature type="binding site" evidence="1">
    <location>
        <position position="12"/>
    </location>
    <ligand>
        <name>[4Fe-4S] cluster</name>
        <dbReference type="ChEBI" id="CHEBI:49883"/>
        <label>1</label>
    </ligand>
</feature>
<feature type="binding site" evidence="1">
    <location>
        <position position="49"/>
    </location>
    <ligand>
        <name>[4Fe-4S] cluster</name>
        <dbReference type="ChEBI" id="CHEBI:49883"/>
        <label>1</label>
    </ligand>
</feature>
<feature type="binding site" evidence="1">
    <location>
        <position position="83"/>
    </location>
    <ligand>
        <name>[4Fe-4S] cluster</name>
        <dbReference type="ChEBI" id="CHEBI:49883"/>
        <label>1</label>
    </ligand>
</feature>
<feature type="binding site" evidence="1">
    <location>
        <position position="157"/>
    </location>
    <ligand>
        <name>[4Fe-4S] cluster</name>
        <dbReference type="ChEBI" id="CHEBI:49883"/>
        <label>2</label>
        <note>4Fe-4S-S-AdoMet</note>
    </ligand>
</feature>
<feature type="binding site" evidence="1">
    <location>
        <position position="161"/>
    </location>
    <ligand>
        <name>[4Fe-4S] cluster</name>
        <dbReference type="ChEBI" id="CHEBI:49883"/>
        <label>2</label>
        <note>4Fe-4S-S-AdoMet</note>
    </ligand>
</feature>
<feature type="binding site" evidence="1">
    <location>
        <position position="164"/>
    </location>
    <ligand>
        <name>[4Fe-4S] cluster</name>
        <dbReference type="ChEBI" id="CHEBI:49883"/>
        <label>2</label>
        <note>4Fe-4S-S-AdoMet</note>
    </ligand>
</feature>
<keyword id="KW-0004">4Fe-4S</keyword>
<keyword id="KW-0963">Cytoplasm</keyword>
<keyword id="KW-0408">Iron</keyword>
<keyword id="KW-0411">Iron-sulfur</keyword>
<keyword id="KW-0479">Metal-binding</keyword>
<keyword id="KW-1185">Reference proteome</keyword>
<keyword id="KW-0949">S-adenosyl-L-methionine</keyword>
<keyword id="KW-0808">Transferase</keyword>
<keyword id="KW-0819">tRNA processing</keyword>
<reference key="1">
    <citation type="journal article" date="2007" name="PLoS Genet.">
        <title>A tale of two oxidation states: bacterial colonization of arsenic-rich environments.</title>
        <authorList>
            <person name="Muller D."/>
            <person name="Medigue C."/>
            <person name="Koechler S."/>
            <person name="Barbe V."/>
            <person name="Barakat M."/>
            <person name="Talla E."/>
            <person name="Bonnefoy V."/>
            <person name="Krin E."/>
            <person name="Arsene-Ploetze F."/>
            <person name="Carapito C."/>
            <person name="Chandler M."/>
            <person name="Cournoyer B."/>
            <person name="Cruveiller S."/>
            <person name="Dossat C."/>
            <person name="Duval S."/>
            <person name="Heymann M."/>
            <person name="Leize E."/>
            <person name="Lieutaud A."/>
            <person name="Lievremont D."/>
            <person name="Makita Y."/>
            <person name="Mangenot S."/>
            <person name="Nitschke W."/>
            <person name="Ortet P."/>
            <person name="Perdrial N."/>
            <person name="Schoepp B."/>
            <person name="Siguier P."/>
            <person name="Simeonova D.D."/>
            <person name="Rouy Z."/>
            <person name="Segurens B."/>
            <person name="Turlin E."/>
            <person name="Vallenet D."/>
            <person name="van Dorsselaer A."/>
            <person name="Weiss S."/>
            <person name="Weissenbach J."/>
            <person name="Lett M.-C."/>
            <person name="Danchin A."/>
            <person name="Bertin P.N."/>
        </authorList>
    </citation>
    <scope>NUCLEOTIDE SEQUENCE [LARGE SCALE GENOMIC DNA]</scope>
    <source>
        <strain>ULPAs1</strain>
    </source>
</reference>
<accession>A4G267</accession>
<comment type="function">
    <text evidence="1">Catalyzes the methylthiolation of N6-(dimethylallyl)adenosine (i(6)A), leading to the formation of 2-methylthio-N6-(dimethylallyl)adenosine (ms(2)i(6)A) at position 37 in tRNAs that read codons beginning with uridine.</text>
</comment>
<comment type="catalytic activity">
    <reaction evidence="1">
        <text>N(6)-dimethylallyladenosine(37) in tRNA + (sulfur carrier)-SH + AH2 + 2 S-adenosyl-L-methionine = 2-methylsulfanyl-N(6)-dimethylallyladenosine(37) in tRNA + (sulfur carrier)-H + 5'-deoxyadenosine + L-methionine + A + S-adenosyl-L-homocysteine + 2 H(+)</text>
        <dbReference type="Rhea" id="RHEA:37067"/>
        <dbReference type="Rhea" id="RHEA-COMP:10375"/>
        <dbReference type="Rhea" id="RHEA-COMP:10376"/>
        <dbReference type="Rhea" id="RHEA-COMP:14737"/>
        <dbReference type="Rhea" id="RHEA-COMP:14739"/>
        <dbReference type="ChEBI" id="CHEBI:13193"/>
        <dbReference type="ChEBI" id="CHEBI:15378"/>
        <dbReference type="ChEBI" id="CHEBI:17319"/>
        <dbReference type="ChEBI" id="CHEBI:17499"/>
        <dbReference type="ChEBI" id="CHEBI:29917"/>
        <dbReference type="ChEBI" id="CHEBI:57844"/>
        <dbReference type="ChEBI" id="CHEBI:57856"/>
        <dbReference type="ChEBI" id="CHEBI:59789"/>
        <dbReference type="ChEBI" id="CHEBI:64428"/>
        <dbReference type="ChEBI" id="CHEBI:74415"/>
        <dbReference type="ChEBI" id="CHEBI:74417"/>
        <dbReference type="EC" id="2.8.4.3"/>
    </reaction>
</comment>
<comment type="cofactor">
    <cofactor evidence="1">
        <name>[4Fe-4S] cluster</name>
        <dbReference type="ChEBI" id="CHEBI:49883"/>
    </cofactor>
    <text evidence="1">Binds 2 [4Fe-4S] clusters. One cluster is coordinated with 3 cysteines and an exchangeable S-adenosyl-L-methionine.</text>
</comment>
<comment type="subunit">
    <text evidence="1">Monomer.</text>
</comment>
<comment type="subcellular location">
    <subcellularLocation>
        <location evidence="1">Cytoplasm</location>
    </subcellularLocation>
</comment>
<comment type="similarity">
    <text evidence="1">Belongs to the methylthiotransferase family. MiaB subfamily.</text>
</comment>
<protein>
    <recommendedName>
        <fullName evidence="1">tRNA-2-methylthio-N(6)-dimethylallyladenosine synthase</fullName>
        <ecNumber evidence="1">2.8.4.3</ecNumber>
    </recommendedName>
    <alternativeName>
        <fullName evidence="1">(Dimethylallyl)adenosine tRNA methylthiotransferase MiaB</fullName>
    </alternativeName>
    <alternativeName>
        <fullName evidence="1">tRNA-i(6)A37 methylthiotransferase</fullName>
    </alternativeName>
</protein>
<dbReference type="EC" id="2.8.4.3" evidence="1"/>
<dbReference type="EMBL" id="CU207211">
    <property type="protein sequence ID" value="CAL60604.1"/>
    <property type="molecule type" value="Genomic_DNA"/>
</dbReference>
<dbReference type="SMR" id="A4G267"/>
<dbReference type="STRING" id="204773.HEAR0381"/>
<dbReference type="KEGG" id="har:HEAR0381"/>
<dbReference type="eggNOG" id="COG0621">
    <property type="taxonomic scope" value="Bacteria"/>
</dbReference>
<dbReference type="HOGENOM" id="CLU_018697_2_0_4"/>
<dbReference type="OrthoDB" id="9805215at2"/>
<dbReference type="Proteomes" id="UP000006697">
    <property type="component" value="Chromosome"/>
</dbReference>
<dbReference type="GO" id="GO:0005829">
    <property type="term" value="C:cytosol"/>
    <property type="evidence" value="ECO:0007669"/>
    <property type="project" value="TreeGrafter"/>
</dbReference>
<dbReference type="GO" id="GO:0051539">
    <property type="term" value="F:4 iron, 4 sulfur cluster binding"/>
    <property type="evidence" value="ECO:0007669"/>
    <property type="project" value="UniProtKB-UniRule"/>
</dbReference>
<dbReference type="GO" id="GO:0046872">
    <property type="term" value="F:metal ion binding"/>
    <property type="evidence" value="ECO:0007669"/>
    <property type="project" value="UniProtKB-KW"/>
</dbReference>
<dbReference type="GO" id="GO:0035597">
    <property type="term" value="F:N6-isopentenyladenosine methylthiotransferase activity"/>
    <property type="evidence" value="ECO:0007669"/>
    <property type="project" value="TreeGrafter"/>
</dbReference>
<dbReference type="CDD" id="cd01335">
    <property type="entry name" value="Radical_SAM"/>
    <property type="match status" value="1"/>
</dbReference>
<dbReference type="FunFam" id="3.40.50.12160:FF:000001">
    <property type="entry name" value="tRNA-2-methylthio-N(6)-dimethylallyladenosine synthase"/>
    <property type="match status" value="1"/>
</dbReference>
<dbReference type="FunFam" id="3.80.30.20:FF:000001">
    <property type="entry name" value="tRNA-2-methylthio-N(6)-dimethylallyladenosine synthase 2"/>
    <property type="match status" value="1"/>
</dbReference>
<dbReference type="Gene3D" id="3.40.50.12160">
    <property type="entry name" value="Methylthiotransferase, N-terminal domain"/>
    <property type="match status" value="1"/>
</dbReference>
<dbReference type="Gene3D" id="3.80.30.20">
    <property type="entry name" value="tm_1862 like domain"/>
    <property type="match status" value="1"/>
</dbReference>
<dbReference type="HAMAP" id="MF_01864">
    <property type="entry name" value="tRNA_metthiotr_MiaB"/>
    <property type="match status" value="1"/>
</dbReference>
<dbReference type="InterPro" id="IPR006638">
    <property type="entry name" value="Elp3/MiaA/NifB-like_rSAM"/>
</dbReference>
<dbReference type="InterPro" id="IPR005839">
    <property type="entry name" value="Methylthiotransferase"/>
</dbReference>
<dbReference type="InterPro" id="IPR020612">
    <property type="entry name" value="Methylthiotransferase_CS"/>
</dbReference>
<dbReference type="InterPro" id="IPR013848">
    <property type="entry name" value="Methylthiotransferase_N"/>
</dbReference>
<dbReference type="InterPro" id="IPR038135">
    <property type="entry name" value="Methylthiotransferase_N_sf"/>
</dbReference>
<dbReference type="InterPro" id="IPR006463">
    <property type="entry name" value="MiaB_methiolase"/>
</dbReference>
<dbReference type="InterPro" id="IPR007197">
    <property type="entry name" value="rSAM"/>
</dbReference>
<dbReference type="InterPro" id="IPR023404">
    <property type="entry name" value="rSAM_horseshoe"/>
</dbReference>
<dbReference type="InterPro" id="IPR002792">
    <property type="entry name" value="TRAM_dom"/>
</dbReference>
<dbReference type="NCBIfam" id="TIGR01574">
    <property type="entry name" value="miaB-methiolase"/>
    <property type="match status" value="1"/>
</dbReference>
<dbReference type="NCBIfam" id="TIGR00089">
    <property type="entry name" value="MiaB/RimO family radical SAM methylthiotransferase"/>
    <property type="match status" value="1"/>
</dbReference>
<dbReference type="PANTHER" id="PTHR43020">
    <property type="entry name" value="CDK5 REGULATORY SUBUNIT-ASSOCIATED PROTEIN 1"/>
    <property type="match status" value="1"/>
</dbReference>
<dbReference type="PANTHER" id="PTHR43020:SF2">
    <property type="entry name" value="MITOCHONDRIAL TRNA METHYLTHIOTRANSFERASE CDK5RAP1"/>
    <property type="match status" value="1"/>
</dbReference>
<dbReference type="Pfam" id="PF04055">
    <property type="entry name" value="Radical_SAM"/>
    <property type="match status" value="1"/>
</dbReference>
<dbReference type="Pfam" id="PF01938">
    <property type="entry name" value="TRAM"/>
    <property type="match status" value="1"/>
</dbReference>
<dbReference type="Pfam" id="PF00919">
    <property type="entry name" value="UPF0004"/>
    <property type="match status" value="1"/>
</dbReference>
<dbReference type="SFLD" id="SFLDF00273">
    <property type="entry name" value="(dimethylallyl)adenosine_tRNA"/>
    <property type="match status" value="1"/>
</dbReference>
<dbReference type="SFLD" id="SFLDG01082">
    <property type="entry name" value="B12-binding_domain_containing"/>
    <property type="match status" value="1"/>
</dbReference>
<dbReference type="SFLD" id="SFLDG01061">
    <property type="entry name" value="methylthiotransferase"/>
    <property type="match status" value="1"/>
</dbReference>
<dbReference type="SMART" id="SM00729">
    <property type="entry name" value="Elp3"/>
    <property type="match status" value="1"/>
</dbReference>
<dbReference type="SUPFAM" id="SSF102114">
    <property type="entry name" value="Radical SAM enzymes"/>
    <property type="match status" value="1"/>
</dbReference>
<dbReference type="PROSITE" id="PS51449">
    <property type="entry name" value="MTTASE_N"/>
    <property type="match status" value="1"/>
</dbReference>
<dbReference type="PROSITE" id="PS01278">
    <property type="entry name" value="MTTASE_RADICAL"/>
    <property type="match status" value="1"/>
</dbReference>
<dbReference type="PROSITE" id="PS51918">
    <property type="entry name" value="RADICAL_SAM"/>
    <property type="match status" value="1"/>
</dbReference>
<dbReference type="PROSITE" id="PS50926">
    <property type="entry name" value="TRAM"/>
    <property type="match status" value="1"/>
</dbReference>